<dbReference type="EC" id="4.6.1.12" evidence="1"/>
<dbReference type="EMBL" id="CP001336">
    <property type="protein sequence ID" value="ACL18462.1"/>
    <property type="molecule type" value="Genomic_DNA"/>
</dbReference>
<dbReference type="RefSeq" id="WP_011459082.1">
    <property type="nucleotide sequence ID" value="NC_011830.1"/>
</dbReference>
<dbReference type="SMR" id="B8G1T9"/>
<dbReference type="KEGG" id="dhd:Dhaf_0395"/>
<dbReference type="HOGENOM" id="CLU_084630_2_0_9"/>
<dbReference type="UniPathway" id="UPA00056">
    <property type="reaction ID" value="UER00095"/>
</dbReference>
<dbReference type="Proteomes" id="UP000007726">
    <property type="component" value="Chromosome"/>
</dbReference>
<dbReference type="GO" id="GO:0008685">
    <property type="term" value="F:2-C-methyl-D-erythritol 2,4-cyclodiphosphate synthase activity"/>
    <property type="evidence" value="ECO:0007669"/>
    <property type="project" value="UniProtKB-UniRule"/>
</dbReference>
<dbReference type="GO" id="GO:0046872">
    <property type="term" value="F:metal ion binding"/>
    <property type="evidence" value="ECO:0007669"/>
    <property type="project" value="UniProtKB-KW"/>
</dbReference>
<dbReference type="GO" id="GO:0019288">
    <property type="term" value="P:isopentenyl diphosphate biosynthetic process, methylerythritol 4-phosphate pathway"/>
    <property type="evidence" value="ECO:0007669"/>
    <property type="project" value="UniProtKB-UniRule"/>
</dbReference>
<dbReference type="GO" id="GO:0016114">
    <property type="term" value="P:terpenoid biosynthetic process"/>
    <property type="evidence" value="ECO:0007669"/>
    <property type="project" value="InterPro"/>
</dbReference>
<dbReference type="CDD" id="cd00554">
    <property type="entry name" value="MECDP_synthase"/>
    <property type="match status" value="1"/>
</dbReference>
<dbReference type="FunFam" id="3.30.1330.50:FF:000001">
    <property type="entry name" value="2-C-methyl-D-erythritol 2,4-cyclodiphosphate synthase"/>
    <property type="match status" value="1"/>
</dbReference>
<dbReference type="Gene3D" id="3.30.1330.50">
    <property type="entry name" value="2-C-methyl-D-erythritol 2,4-cyclodiphosphate synthase"/>
    <property type="match status" value="1"/>
</dbReference>
<dbReference type="HAMAP" id="MF_00107">
    <property type="entry name" value="IspF"/>
    <property type="match status" value="1"/>
</dbReference>
<dbReference type="InterPro" id="IPR003526">
    <property type="entry name" value="MECDP_synthase"/>
</dbReference>
<dbReference type="InterPro" id="IPR020555">
    <property type="entry name" value="MECDP_synthase_CS"/>
</dbReference>
<dbReference type="InterPro" id="IPR036571">
    <property type="entry name" value="MECDP_synthase_sf"/>
</dbReference>
<dbReference type="NCBIfam" id="TIGR00151">
    <property type="entry name" value="ispF"/>
    <property type="match status" value="1"/>
</dbReference>
<dbReference type="PANTHER" id="PTHR43181">
    <property type="entry name" value="2-C-METHYL-D-ERYTHRITOL 2,4-CYCLODIPHOSPHATE SYNTHASE, CHLOROPLASTIC"/>
    <property type="match status" value="1"/>
</dbReference>
<dbReference type="PANTHER" id="PTHR43181:SF1">
    <property type="entry name" value="2-C-METHYL-D-ERYTHRITOL 2,4-CYCLODIPHOSPHATE SYNTHASE, CHLOROPLASTIC"/>
    <property type="match status" value="1"/>
</dbReference>
<dbReference type="Pfam" id="PF02542">
    <property type="entry name" value="YgbB"/>
    <property type="match status" value="1"/>
</dbReference>
<dbReference type="SUPFAM" id="SSF69765">
    <property type="entry name" value="IpsF-like"/>
    <property type="match status" value="1"/>
</dbReference>
<dbReference type="PROSITE" id="PS01350">
    <property type="entry name" value="ISPF"/>
    <property type="match status" value="1"/>
</dbReference>
<protein>
    <recommendedName>
        <fullName evidence="1">2-C-methyl-D-erythritol 2,4-cyclodiphosphate synthase</fullName>
        <shortName evidence="1">MECDP-synthase</shortName>
        <shortName evidence="1">MECPP-synthase</shortName>
        <shortName evidence="1">MECPS</shortName>
        <ecNumber evidence="1">4.6.1.12</ecNumber>
    </recommendedName>
</protein>
<feature type="chain" id="PRO_1000190706" description="2-C-methyl-D-erythritol 2,4-cyclodiphosphate synthase">
    <location>
        <begin position="1"/>
        <end position="158"/>
    </location>
</feature>
<feature type="binding site" evidence="1">
    <location>
        <begin position="9"/>
        <end position="11"/>
    </location>
    <ligand>
        <name>4-CDP-2-C-methyl-D-erythritol 2-phosphate</name>
        <dbReference type="ChEBI" id="CHEBI:57919"/>
    </ligand>
</feature>
<feature type="binding site" evidence="1">
    <location>
        <position position="9"/>
    </location>
    <ligand>
        <name>a divalent metal cation</name>
        <dbReference type="ChEBI" id="CHEBI:60240"/>
    </ligand>
</feature>
<feature type="binding site" evidence="1">
    <location>
        <position position="11"/>
    </location>
    <ligand>
        <name>a divalent metal cation</name>
        <dbReference type="ChEBI" id="CHEBI:60240"/>
    </ligand>
</feature>
<feature type="binding site" evidence="1">
    <location>
        <begin position="35"/>
        <end position="36"/>
    </location>
    <ligand>
        <name>4-CDP-2-C-methyl-D-erythritol 2-phosphate</name>
        <dbReference type="ChEBI" id="CHEBI:57919"/>
    </ligand>
</feature>
<feature type="binding site" evidence="1">
    <location>
        <position position="43"/>
    </location>
    <ligand>
        <name>a divalent metal cation</name>
        <dbReference type="ChEBI" id="CHEBI:60240"/>
    </ligand>
</feature>
<feature type="binding site" evidence="1">
    <location>
        <begin position="57"/>
        <end position="59"/>
    </location>
    <ligand>
        <name>4-CDP-2-C-methyl-D-erythritol 2-phosphate</name>
        <dbReference type="ChEBI" id="CHEBI:57919"/>
    </ligand>
</feature>
<feature type="binding site" evidence="1">
    <location>
        <begin position="62"/>
        <end position="66"/>
    </location>
    <ligand>
        <name>4-CDP-2-C-methyl-D-erythritol 2-phosphate</name>
        <dbReference type="ChEBI" id="CHEBI:57919"/>
    </ligand>
</feature>
<feature type="binding site" evidence="1">
    <location>
        <begin position="133"/>
        <end position="136"/>
    </location>
    <ligand>
        <name>4-CDP-2-C-methyl-D-erythritol 2-phosphate</name>
        <dbReference type="ChEBI" id="CHEBI:57919"/>
    </ligand>
</feature>
<feature type="binding site" evidence="1">
    <location>
        <position position="140"/>
    </location>
    <ligand>
        <name>4-CDP-2-C-methyl-D-erythritol 2-phosphate</name>
        <dbReference type="ChEBI" id="CHEBI:57919"/>
    </ligand>
</feature>
<feature type="binding site" evidence="1">
    <location>
        <position position="143"/>
    </location>
    <ligand>
        <name>4-CDP-2-C-methyl-D-erythritol 2-phosphate</name>
        <dbReference type="ChEBI" id="CHEBI:57919"/>
    </ligand>
</feature>
<feature type="site" description="Transition state stabilizer" evidence="1">
    <location>
        <position position="35"/>
    </location>
</feature>
<feature type="site" description="Transition state stabilizer" evidence="1">
    <location>
        <position position="134"/>
    </location>
</feature>
<evidence type="ECO:0000255" key="1">
    <source>
        <dbReference type="HAMAP-Rule" id="MF_00107"/>
    </source>
</evidence>
<organism>
    <name type="scientific">Desulfitobacterium hafniense (strain DSM 10664 / DCB-2)</name>
    <dbReference type="NCBI Taxonomy" id="272564"/>
    <lineage>
        <taxon>Bacteria</taxon>
        <taxon>Bacillati</taxon>
        <taxon>Bacillota</taxon>
        <taxon>Clostridia</taxon>
        <taxon>Eubacteriales</taxon>
        <taxon>Desulfitobacteriaceae</taxon>
        <taxon>Desulfitobacterium</taxon>
    </lineage>
</organism>
<gene>
    <name evidence="1" type="primary">ispF</name>
    <name type="ordered locus">Dhaf_0395</name>
</gene>
<proteinExistence type="inferred from homology"/>
<comment type="function">
    <text evidence="1">Involved in the biosynthesis of isopentenyl diphosphate (IPP) and dimethylallyl diphosphate (DMAPP), two major building blocks of isoprenoid compounds. Catalyzes the conversion of 4-diphosphocytidyl-2-C-methyl-D-erythritol 2-phosphate (CDP-ME2P) to 2-C-methyl-D-erythritol 2,4-cyclodiphosphate (ME-CPP) with a corresponding release of cytidine 5-monophosphate (CMP).</text>
</comment>
<comment type="catalytic activity">
    <reaction evidence="1">
        <text>4-CDP-2-C-methyl-D-erythritol 2-phosphate = 2-C-methyl-D-erythritol 2,4-cyclic diphosphate + CMP</text>
        <dbReference type="Rhea" id="RHEA:23864"/>
        <dbReference type="ChEBI" id="CHEBI:57919"/>
        <dbReference type="ChEBI" id="CHEBI:58483"/>
        <dbReference type="ChEBI" id="CHEBI:60377"/>
        <dbReference type="EC" id="4.6.1.12"/>
    </reaction>
</comment>
<comment type="cofactor">
    <cofactor evidence="1">
        <name>a divalent metal cation</name>
        <dbReference type="ChEBI" id="CHEBI:60240"/>
    </cofactor>
    <text evidence="1">Binds 1 divalent metal cation per subunit.</text>
</comment>
<comment type="pathway">
    <text evidence="1">Isoprenoid biosynthesis; isopentenyl diphosphate biosynthesis via DXP pathway; isopentenyl diphosphate from 1-deoxy-D-xylulose 5-phosphate: step 4/6.</text>
</comment>
<comment type="subunit">
    <text evidence="1">Homotrimer.</text>
</comment>
<comment type="similarity">
    <text evidence="1">Belongs to the IspF family.</text>
</comment>
<sequence length="158" mass="17213">MLRVGIGYDVHALVAGRPLILAGIDIPHEKGLLGHSDADVLTHTLMDALLGALALGDLGKHFPDTDERYRGISSMKLLEQVMKLLEERGYAIGNIDCIIAAQRPKLAPYIPQMRENLARALKTDLENVSVKATTTERLGFEGREEGISSQAIVCLVKV</sequence>
<reference key="1">
    <citation type="journal article" date="2012" name="BMC Microbiol.">
        <title>Genome sequence of Desulfitobacterium hafniense DCB-2, a Gram-positive anaerobe capable of dehalogenation and metal reduction.</title>
        <authorList>
            <person name="Kim S.H."/>
            <person name="Harzman C."/>
            <person name="Davis J.K."/>
            <person name="Hutcheson R."/>
            <person name="Broderick J.B."/>
            <person name="Marsh T.L."/>
            <person name="Tiedje J.M."/>
        </authorList>
    </citation>
    <scope>NUCLEOTIDE SEQUENCE [LARGE SCALE GENOMIC DNA]</scope>
    <source>
        <strain>DSM 10664 / DCB-2</strain>
    </source>
</reference>
<name>ISPF_DESHD</name>
<keyword id="KW-0414">Isoprene biosynthesis</keyword>
<keyword id="KW-0456">Lyase</keyword>
<keyword id="KW-0479">Metal-binding</keyword>
<accession>B8G1T9</accession>